<name>MIAA_RUTMC</name>
<comment type="function">
    <text evidence="1">Catalyzes the transfer of a dimethylallyl group onto the adenine at position 37 in tRNAs that read codons beginning with uridine, leading to the formation of N6-(dimethylallyl)adenosine (i(6)A).</text>
</comment>
<comment type="catalytic activity">
    <reaction evidence="1">
        <text>adenosine(37) in tRNA + dimethylallyl diphosphate = N(6)-dimethylallyladenosine(37) in tRNA + diphosphate</text>
        <dbReference type="Rhea" id="RHEA:26482"/>
        <dbReference type="Rhea" id="RHEA-COMP:10162"/>
        <dbReference type="Rhea" id="RHEA-COMP:10375"/>
        <dbReference type="ChEBI" id="CHEBI:33019"/>
        <dbReference type="ChEBI" id="CHEBI:57623"/>
        <dbReference type="ChEBI" id="CHEBI:74411"/>
        <dbReference type="ChEBI" id="CHEBI:74415"/>
        <dbReference type="EC" id="2.5.1.75"/>
    </reaction>
</comment>
<comment type="cofactor">
    <cofactor evidence="1">
        <name>Mg(2+)</name>
        <dbReference type="ChEBI" id="CHEBI:18420"/>
    </cofactor>
</comment>
<comment type="subunit">
    <text evidence="1">Monomer.</text>
</comment>
<comment type="similarity">
    <text evidence="1">Belongs to the IPP transferase family.</text>
</comment>
<reference key="1">
    <citation type="journal article" date="2007" name="Science">
        <title>The Calyptogena magnifica chemoautotrophic symbiont genome.</title>
        <authorList>
            <person name="Newton I.L.G."/>
            <person name="Woyke T."/>
            <person name="Auchtung T.A."/>
            <person name="Dilly G.F."/>
            <person name="Dutton R.J."/>
            <person name="Fisher M.C."/>
            <person name="Fontanez K.M."/>
            <person name="Lau E."/>
            <person name="Stewart F.J."/>
            <person name="Richardson P.M."/>
            <person name="Barry K.W."/>
            <person name="Saunders E."/>
            <person name="Detter J.C."/>
            <person name="Wu D."/>
            <person name="Eisen J.A."/>
            <person name="Cavanaugh C.M."/>
        </authorList>
    </citation>
    <scope>NUCLEOTIDE SEQUENCE [LARGE SCALE GENOMIC DNA]</scope>
</reference>
<proteinExistence type="inferred from homology"/>
<sequence>MPIKINKTVIFLMGPTTSGKTDLAIKLSQQFKTRLISVDSALIYKGMDIGTAKPDKATLKKYPHHLIDICNPEDSYSAFNFARNANAQIKTAFANNELPILVGGTSFYFHALEYGLSKLPESTPESKEKFNQLLKSKGTIKLHRDLKRIDLQAANRIHPNDAQRITRALEVFDLSGKTLSKLQGNKKPIINHPIKKIILMPERSELHQRIEERFLSMMEHGFLDEVKHLKQNPNLHENLPAIRCVGYRQAWQYLNGKIDKAEMIEKAIIATRKLCKRQNTWLKSEKYVFILKSPSPVKVVTFINS</sequence>
<protein>
    <recommendedName>
        <fullName evidence="1">tRNA dimethylallyltransferase</fullName>
        <ecNumber evidence="1">2.5.1.75</ecNumber>
    </recommendedName>
    <alternativeName>
        <fullName evidence="1">Dimethylallyl diphosphate:tRNA dimethylallyltransferase</fullName>
        <shortName evidence="1">DMAPP:tRNA dimethylallyltransferase</shortName>
        <shortName evidence="1">DMATase</shortName>
    </alternativeName>
    <alternativeName>
        <fullName evidence="1">Isopentenyl-diphosphate:tRNA isopentenyltransferase</fullName>
        <shortName evidence="1">IPP transferase</shortName>
        <shortName evidence="1">IPPT</shortName>
        <shortName evidence="1">IPTase</shortName>
    </alternativeName>
</protein>
<keyword id="KW-0067">ATP-binding</keyword>
<keyword id="KW-0460">Magnesium</keyword>
<keyword id="KW-0547">Nucleotide-binding</keyword>
<keyword id="KW-0808">Transferase</keyword>
<keyword id="KW-0819">tRNA processing</keyword>
<accession>A1AX35</accession>
<organism>
    <name type="scientific">Ruthia magnifica subsp. Calyptogena magnifica</name>
    <dbReference type="NCBI Taxonomy" id="413404"/>
    <lineage>
        <taxon>Bacteria</taxon>
        <taxon>Pseudomonadati</taxon>
        <taxon>Pseudomonadota</taxon>
        <taxon>Gammaproteobacteria</taxon>
        <taxon>Candidatus Pseudothioglobaceae</taxon>
        <taxon>Candidatus Ruthturnera</taxon>
    </lineage>
</organism>
<dbReference type="EC" id="2.5.1.75" evidence="1"/>
<dbReference type="EMBL" id="CP000488">
    <property type="protein sequence ID" value="ABL02492.1"/>
    <property type="molecule type" value="Genomic_DNA"/>
</dbReference>
<dbReference type="RefSeq" id="WP_011738117.1">
    <property type="nucleotide sequence ID" value="NC_008610.1"/>
</dbReference>
<dbReference type="SMR" id="A1AX35"/>
<dbReference type="STRING" id="413404.Rmag_0765"/>
<dbReference type="KEGG" id="rma:Rmag_0765"/>
<dbReference type="eggNOG" id="COG0324">
    <property type="taxonomic scope" value="Bacteria"/>
</dbReference>
<dbReference type="HOGENOM" id="CLU_032616_0_0_6"/>
<dbReference type="OrthoDB" id="9776390at2"/>
<dbReference type="Proteomes" id="UP000002587">
    <property type="component" value="Chromosome"/>
</dbReference>
<dbReference type="GO" id="GO:0005524">
    <property type="term" value="F:ATP binding"/>
    <property type="evidence" value="ECO:0007669"/>
    <property type="project" value="UniProtKB-UniRule"/>
</dbReference>
<dbReference type="GO" id="GO:0052381">
    <property type="term" value="F:tRNA dimethylallyltransferase activity"/>
    <property type="evidence" value="ECO:0007669"/>
    <property type="project" value="UniProtKB-UniRule"/>
</dbReference>
<dbReference type="GO" id="GO:0006400">
    <property type="term" value="P:tRNA modification"/>
    <property type="evidence" value="ECO:0007669"/>
    <property type="project" value="TreeGrafter"/>
</dbReference>
<dbReference type="FunFam" id="1.10.20.140:FF:000001">
    <property type="entry name" value="tRNA dimethylallyltransferase"/>
    <property type="match status" value="1"/>
</dbReference>
<dbReference type="Gene3D" id="1.10.20.140">
    <property type="match status" value="1"/>
</dbReference>
<dbReference type="Gene3D" id="3.40.50.300">
    <property type="entry name" value="P-loop containing nucleotide triphosphate hydrolases"/>
    <property type="match status" value="1"/>
</dbReference>
<dbReference type="HAMAP" id="MF_00185">
    <property type="entry name" value="IPP_trans"/>
    <property type="match status" value="1"/>
</dbReference>
<dbReference type="InterPro" id="IPR039657">
    <property type="entry name" value="Dimethylallyltransferase"/>
</dbReference>
<dbReference type="InterPro" id="IPR018022">
    <property type="entry name" value="IPT"/>
</dbReference>
<dbReference type="InterPro" id="IPR027417">
    <property type="entry name" value="P-loop_NTPase"/>
</dbReference>
<dbReference type="NCBIfam" id="TIGR00174">
    <property type="entry name" value="miaA"/>
    <property type="match status" value="1"/>
</dbReference>
<dbReference type="PANTHER" id="PTHR11088">
    <property type="entry name" value="TRNA DIMETHYLALLYLTRANSFERASE"/>
    <property type="match status" value="1"/>
</dbReference>
<dbReference type="PANTHER" id="PTHR11088:SF60">
    <property type="entry name" value="TRNA DIMETHYLALLYLTRANSFERASE"/>
    <property type="match status" value="1"/>
</dbReference>
<dbReference type="Pfam" id="PF01715">
    <property type="entry name" value="IPPT"/>
    <property type="match status" value="1"/>
</dbReference>
<dbReference type="SUPFAM" id="SSF52540">
    <property type="entry name" value="P-loop containing nucleoside triphosphate hydrolases"/>
    <property type="match status" value="2"/>
</dbReference>
<evidence type="ECO:0000255" key="1">
    <source>
        <dbReference type="HAMAP-Rule" id="MF_00185"/>
    </source>
</evidence>
<feature type="chain" id="PRO_0000377300" description="tRNA dimethylallyltransferase">
    <location>
        <begin position="1"/>
        <end position="305"/>
    </location>
</feature>
<feature type="region of interest" description="Interaction with substrate tRNA" evidence="1">
    <location>
        <begin position="39"/>
        <end position="42"/>
    </location>
</feature>
<feature type="region of interest" description="Interaction with substrate tRNA" evidence="1">
    <location>
        <begin position="163"/>
        <end position="167"/>
    </location>
</feature>
<feature type="region of interest" description="Interaction with substrate tRNA" evidence="1">
    <location>
        <begin position="243"/>
        <end position="248"/>
    </location>
</feature>
<feature type="binding site" evidence="1">
    <location>
        <begin position="14"/>
        <end position="21"/>
    </location>
    <ligand>
        <name>ATP</name>
        <dbReference type="ChEBI" id="CHEBI:30616"/>
    </ligand>
</feature>
<feature type="binding site" evidence="1">
    <location>
        <begin position="16"/>
        <end position="21"/>
    </location>
    <ligand>
        <name>substrate</name>
    </ligand>
</feature>
<feature type="site" description="Interaction with substrate tRNA" evidence="1">
    <location>
        <position position="105"/>
    </location>
</feature>
<gene>
    <name evidence="1" type="primary">miaA</name>
    <name type="ordered locus">Rmag_0765</name>
</gene>